<comment type="function">
    <text evidence="1">Catalyzes the rearrangement of 1-deoxy-D-xylulose 5-phosphate (DXP) to produce the thiazole phosphate moiety of thiamine. Sulfur is provided by the thiocarboxylate moiety of the carrier protein ThiS. In vitro, sulfur can be provided by H(2)S.</text>
</comment>
<comment type="catalytic activity">
    <reaction evidence="1">
        <text>[ThiS sulfur-carrier protein]-C-terminal-Gly-aminoethanethioate + 2-iminoacetate + 1-deoxy-D-xylulose 5-phosphate = [ThiS sulfur-carrier protein]-C-terminal Gly-Gly + 2-[(2R,5Z)-2-carboxy-4-methylthiazol-5(2H)-ylidene]ethyl phosphate + 2 H2O + H(+)</text>
        <dbReference type="Rhea" id="RHEA:26297"/>
        <dbReference type="Rhea" id="RHEA-COMP:12909"/>
        <dbReference type="Rhea" id="RHEA-COMP:19908"/>
        <dbReference type="ChEBI" id="CHEBI:15377"/>
        <dbReference type="ChEBI" id="CHEBI:15378"/>
        <dbReference type="ChEBI" id="CHEBI:57792"/>
        <dbReference type="ChEBI" id="CHEBI:62899"/>
        <dbReference type="ChEBI" id="CHEBI:77846"/>
        <dbReference type="ChEBI" id="CHEBI:90778"/>
        <dbReference type="ChEBI" id="CHEBI:232372"/>
        <dbReference type="EC" id="2.8.1.10"/>
    </reaction>
</comment>
<comment type="pathway">
    <text evidence="1">Cofactor biosynthesis; thiamine diphosphate biosynthesis.</text>
</comment>
<comment type="subunit">
    <text evidence="1">Homotetramer. Forms heterodimers with either ThiH or ThiS.</text>
</comment>
<comment type="subcellular location">
    <subcellularLocation>
        <location evidence="1">Cytoplasm</location>
    </subcellularLocation>
</comment>
<comment type="similarity">
    <text evidence="1">Belongs to the ThiG family.</text>
</comment>
<accession>A8AKT3</accession>
<evidence type="ECO:0000255" key="1">
    <source>
        <dbReference type="HAMAP-Rule" id="MF_00443"/>
    </source>
</evidence>
<gene>
    <name evidence="1" type="primary">thiG</name>
    <name type="ordered locus">CKO_02996</name>
</gene>
<organism>
    <name type="scientific">Citrobacter koseri (strain ATCC BAA-895 / CDC 4225-83 / SGSC4696)</name>
    <dbReference type="NCBI Taxonomy" id="290338"/>
    <lineage>
        <taxon>Bacteria</taxon>
        <taxon>Pseudomonadati</taxon>
        <taxon>Pseudomonadota</taxon>
        <taxon>Gammaproteobacteria</taxon>
        <taxon>Enterobacterales</taxon>
        <taxon>Enterobacteriaceae</taxon>
        <taxon>Citrobacter</taxon>
    </lineage>
</organism>
<protein>
    <recommendedName>
        <fullName evidence="1">Thiazole synthase</fullName>
        <ecNumber evidence="1">2.8.1.10</ecNumber>
    </recommendedName>
</protein>
<keyword id="KW-0963">Cytoplasm</keyword>
<keyword id="KW-1185">Reference proteome</keyword>
<keyword id="KW-0704">Schiff base</keyword>
<keyword id="KW-0784">Thiamine biosynthesis</keyword>
<keyword id="KW-0808">Transferase</keyword>
<proteinExistence type="inferred from homology"/>
<feature type="chain" id="PRO_1000025999" description="Thiazole synthase">
    <location>
        <begin position="1"/>
        <end position="256"/>
    </location>
</feature>
<feature type="active site" description="Schiff-base intermediate with DXP" evidence="1">
    <location>
        <position position="95"/>
    </location>
</feature>
<feature type="binding site" evidence="1">
    <location>
        <position position="156"/>
    </location>
    <ligand>
        <name>1-deoxy-D-xylulose 5-phosphate</name>
        <dbReference type="ChEBI" id="CHEBI:57792"/>
    </ligand>
</feature>
<feature type="binding site" evidence="1">
    <location>
        <begin position="182"/>
        <end position="183"/>
    </location>
    <ligand>
        <name>1-deoxy-D-xylulose 5-phosphate</name>
        <dbReference type="ChEBI" id="CHEBI:57792"/>
    </ligand>
</feature>
<feature type="binding site" evidence="1">
    <location>
        <begin position="204"/>
        <end position="205"/>
    </location>
    <ligand>
        <name>1-deoxy-D-xylulose 5-phosphate</name>
        <dbReference type="ChEBI" id="CHEBI:57792"/>
    </ligand>
</feature>
<reference key="1">
    <citation type="submission" date="2007-08" db="EMBL/GenBank/DDBJ databases">
        <authorList>
            <consortium name="The Citrobacter koseri Genome Sequencing Project"/>
            <person name="McClelland M."/>
            <person name="Sanderson E.K."/>
            <person name="Porwollik S."/>
            <person name="Spieth J."/>
            <person name="Clifton W.S."/>
            <person name="Latreille P."/>
            <person name="Courtney L."/>
            <person name="Wang C."/>
            <person name="Pepin K."/>
            <person name="Bhonagiri V."/>
            <person name="Nash W."/>
            <person name="Johnson M."/>
            <person name="Thiruvilangam P."/>
            <person name="Wilson R."/>
        </authorList>
    </citation>
    <scope>NUCLEOTIDE SEQUENCE [LARGE SCALE GENOMIC DNA]</scope>
    <source>
        <strain>ATCC BAA-895 / CDC 4225-83 / SGSC4696</strain>
    </source>
</reference>
<dbReference type="EC" id="2.8.1.10" evidence="1"/>
<dbReference type="EMBL" id="CP000822">
    <property type="protein sequence ID" value="ABV14096.1"/>
    <property type="molecule type" value="Genomic_DNA"/>
</dbReference>
<dbReference type="RefSeq" id="WP_012133805.1">
    <property type="nucleotide sequence ID" value="NC_009792.1"/>
</dbReference>
<dbReference type="SMR" id="A8AKT3"/>
<dbReference type="STRING" id="290338.CKO_02996"/>
<dbReference type="GeneID" id="45136810"/>
<dbReference type="KEGG" id="cko:CKO_02996"/>
<dbReference type="HOGENOM" id="CLU_062233_1_0_6"/>
<dbReference type="OrthoDB" id="9805935at2"/>
<dbReference type="UniPathway" id="UPA00060"/>
<dbReference type="Proteomes" id="UP000008148">
    <property type="component" value="Chromosome"/>
</dbReference>
<dbReference type="GO" id="GO:0005737">
    <property type="term" value="C:cytoplasm"/>
    <property type="evidence" value="ECO:0007669"/>
    <property type="project" value="UniProtKB-SubCell"/>
</dbReference>
<dbReference type="GO" id="GO:1990107">
    <property type="term" value="F:thiazole synthase activity"/>
    <property type="evidence" value="ECO:0007669"/>
    <property type="project" value="UniProtKB-EC"/>
</dbReference>
<dbReference type="GO" id="GO:0009229">
    <property type="term" value="P:thiamine diphosphate biosynthetic process"/>
    <property type="evidence" value="ECO:0007669"/>
    <property type="project" value="UniProtKB-UniRule"/>
</dbReference>
<dbReference type="CDD" id="cd04728">
    <property type="entry name" value="ThiG"/>
    <property type="match status" value="1"/>
</dbReference>
<dbReference type="FunFam" id="3.20.20.70:FF:000049">
    <property type="entry name" value="Thiazole synthase"/>
    <property type="match status" value="1"/>
</dbReference>
<dbReference type="Gene3D" id="3.20.20.70">
    <property type="entry name" value="Aldolase class I"/>
    <property type="match status" value="1"/>
</dbReference>
<dbReference type="HAMAP" id="MF_00443">
    <property type="entry name" value="ThiG"/>
    <property type="match status" value="1"/>
</dbReference>
<dbReference type="InterPro" id="IPR013785">
    <property type="entry name" value="Aldolase_TIM"/>
</dbReference>
<dbReference type="InterPro" id="IPR033983">
    <property type="entry name" value="Thiazole_synthase_ThiG"/>
</dbReference>
<dbReference type="InterPro" id="IPR008867">
    <property type="entry name" value="ThiG"/>
</dbReference>
<dbReference type="PANTHER" id="PTHR34266">
    <property type="entry name" value="THIAZOLE SYNTHASE"/>
    <property type="match status" value="1"/>
</dbReference>
<dbReference type="PANTHER" id="PTHR34266:SF2">
    <property type="entry name" value="THIAZOLE SYNTHASE"/>
    <property type="match status" value="1"/>
</dbReference>
<dbReference type="Pfam" id="PF05690">
    <property type="entry name" value="ThiG"/>
    <property type="match status" value="1"/>
</dbReference>
<dbReference type="SUPFAM" id="SSF110399">
    <property type="entry name" value="ThiG-like"/>
    <property type="match status" value="1"/>
</dbReference>
<sequence>MLRIADKTFDSHLFTGTGKFASSQLMVEAIRASGSQLVTLAMKRVDLRQHNDAILAPLIDAGVTLLPNTSGAKTAEEAIFAAQLAREALGTHWLKLEIHPDARWLLPDPVETLKAAEALVKQGFVVLPYCGADPVLCKRLEEVGCAAVMPLGAPIGSNQGLETRAMLEIIIQQATVPVVVDAGIGVPSHATQALEMGADAVLVNTAIAVADDPVMMAQAFRLAVEAGVMARRAVPGTRSSYAQATSPLTGFLEASA</sequence>
<name>THIG_CITK8</name>